<name>LHB1_MAGML</name>
<organism>
    <name type="scientific">Magnetospirillum molischianum</name>
    <name type="common">Rhodospirillum molischianum</name>
    <dbReference type="NCBI Taxonomy" id="1083"/>
    <lineage>
        <taxon>Bacteria</taxon>
        <taxon>Pseudomonadati</taxon>
        <taxon>Pseudomonadota</taxon>
        <taxon>Alphaproteobacteria</taxon>
        <taxon>Rhodospirillales</taxon>
        <taxon>Rhodospirillaceae</taxon>
        <taxon>Magnetospirillum</taxon>
    </lineage>
</organism>
<proteinExistence type="evidence at protein level"/>
<evidence type="ECO:0000269" key="1">
    <source>
    </source>
</evidence>
<evidence type="ECO:0000305" key="2"/>
<evidence type="ECO:0007829" key="3">
    <source>
        <dbReference type="PDB" id="1LGH"/>
    </source>
</evidence>
<comment type="function">
    <text>Antenna complexes are light-harvesting systems, which transfer the excitation energy to the reaction centers.</text>
</comment>
<comment type="subunit">
    <text>The core complex is formed by different alpha and beta chains, binding bacteriochlorophyll molecules, and arranged most probably in tetrameric structures disposed around the reaction center.</text>
</comment>
<comment type="subcellular location">
    <subcellularLocation>
        <location>Cell inner membrane</location>
        <topology>Single-pass type II membrane protein</topology>
    </subcellularLocation>
</comment>
<comment type="similarity">
    <text evidence="2">Belongs to the antenna complex beta subunit family.</text>
</comment>
<feature type="initiator methionine" description="Removed" evidence="1">
    <location>
        <position position="1"/>
    </location>
</feature>
<feature type="chain" id="PRO_0000099827" description="Light-harvesting protein B-800/850 beta 1 chain">
    <location>
        <begin position="2"/>
        <end position="46"/>
    </location>
</feature>
<feature type="topological domain" description="Cytoplasmic">
    <location>
        <begin position="2"/>
        <end position="19"/>
    </location>
</feature>
<feature type="transmembrane region" description="Helical">
    <location>
        <begin position="20"/>
        <end position="42"/>
    </location>
</feature>
<feature type="topological domain" description="Periplasmic">
    <location>
        <begin position="43"/>
        <end position="46"/>
    </location>
</feature>
<feature type="binding site" description="axial binding residue">
    <location>
        <position position="18"/>
    </location>
    <ligand>
        <name>a bacteriochlorophyll</name>
        <dbReference type="ChEBI" id="CHEBI:38201"/>
    </ligand>
    <ligandPart>
        <name>Mg</name>
        <dbReference type="ChEBI" id="CHEBI:25107"/>
    </ligandPart>
</feature>
<feature type="binding site" description="axial binding residue">
    <location>
        <position position="36"/>
    </location>
    <ligand>
        <name>a bacteriochlorophyll</name>
        <dbReference type="ChEBI" id="CHEBI:38201"/>
    </ligand>
    <ligandPart>
        <name>Mg</name>
        <dbReference type="ChEBI" id="CHEBI:25107"/>
    </ligandPart>
</feature>
<feature type="strand" evidence="3">
    <location>
        <begin position="6"/>
        <end position="8"/>
    </location>
</feature>
<feature type="helix" evidence="3">
    <location>
        <begin position="11"/>
        <end position="42"/>
    </location>
</feature>
<keyword id="KW-0002">3D-structure</keyword>
<keyword id="KW-0042">Antenna complex</keyword>
<keyword id="KW-0076">Bacteriochlorophyll</keyword>
<keyword id="KW-0997">Cell inner membrane</keyword>
<keyword id="KW-1003">Cell membrane</keyword>
<keyword id="KW-0148">Chlorophyll</keyword>
<keyword id="KW-0157">Chromophore</keyword>
<keyword id="KW-0903">Direct protein sequencing</keyword>
<keyword id="KW-0437">Light-harvesting polypeptide</keyword>
<keyword id="KW-0460">Magnesium</keyword>
<keyword id="KW-0472">Membrane</keyword>
<keyword id="KW-0479">Metal-binding</keyword>
<keyword id="KW-0812">Transmembrane</keyword>
<keyword id="KW-1133">Transmembrane helix</keyword>
<protein>
    <recommendedName>
        <fullName>Light-harvesting protein B-800/850 beta 1 chain</fullName>
    </recommendedName>
    <alternativeName>
        <fullName>Antenna pigment protein beta 1 chain</fullName>
    </alternativeName>
</protein>
<accession>P95673</accession>
<sequence length="46" mass="5247">MAERSLSGLTEEEAIAVHDQFKTTFSAFIILAAVAHVLVWVWKPWF</sequence>
<reference key="1">
    <citation type="journal article" date="1996" name="Biochim. Biophys. Acta">
        <title>Molecular cloning, DNA sequence and transcriptional analysis of the Rhodospirillum molischianum B800/850 light-harvesting genes.</title>
        <authorList>
            <person name="Germeroth L."/>
            <person name="Reilaender H."/>
            <person name="Michel H."/>
        </authorList>
    </citation>
    <scope>NUCLEOTIDE SEQUENCE [GENOMIC DNA]</scope>
    <source>
        <strain>DSM 119 / LMG 4353 / Pfennig 3660</strain>
    </source>
</reference>
<reference key="2">
    <citation type="journal article" date="1993" name="Biochemistry">
        <title>Unexpected similarities of the B800-850 light-harvesting complex from Rhodospirillum molischianum to the B870 light-harvesting complexes from other purple photosynthetic bacteria.</title>
        <authorList>
            <person name="Germeroth L."/>
            <person name="Lottspeich F."/>
            <person name="Robert B."/>
            <person name="Michel H."/>
        </authorList>
    </citation>
    <scope>PROTEIN SEQUENCE OF 2-46</scope>
    <source>
        <strain>DSM 119 / LMG 4353 / Pfennig 3660</strain>
    </source>
</reference>
<reference key="3">
    <citation type="journal article" date="1996" name="Structure">
        <title>The crystal structure of the light-harvesting complex II (B800-850) from Rhodospirillum molischianum.</title>
        <authorList>
            <person name="Koepke J."/>
            <person name="Hu X."/>
            <person name="Muenke C."/>
            <person name="Schulten K."/>
            <person name="Michel H."/>
        </authorList>
    </citation>
    <scope>X-RAY CRYSTALLOGRAPHY (2.4 ANGSTROMS)</scope>
    <source>
        <strain>DSM 119 / LMG 4353 / Pfennig 3660</strain>
    </source>
</reference>
<dbReference type="EMBL" id="S82431">
    <property type="protein sequence ID" value="AAB46769.1"/>
    <property type="molecule type" value="Genomic_DNA"/>
</dbReference>
<dbReference type="PIR" id="B49290">
    <property type="entry name" value="B49290"/>
</dbReference>
<dbReference type="PDB" id="1LGH">
    <property type="method" value="X-ray"/>
    <property type="resolution" value="2.40 A"/>
    <property type="chains" value="B/E/H/K=2-46"/>
</dbReference>
<dbReference type="PDB" id="7TUW">
    <property type="method" value="EM"/>
    <property type="resolution" value="8.20 A"/>
    <property type="chains" value="N/P/R/T/V/X/Z/b=1-46"/>
</dbReference>
<dbReference type="PDB" id="7TV3">
    <property type="method" value="EM"/>
    <property type="resolution" value="11.40 A"/>
    <property type="chains" value="B/E/F/H/J/L/N/P=4-46"/>
</dbReference>
<dbReference type="PDB" id="8FB9">
    <property type="method" value="EM"/>
    <property type="resolution" value="6.40 A"/>
    <property type="chains" value="N/P/R/T/V/X/Z/b=2-46"/>
</dbReference>
<dbReference type="PDB" id="8FBB">
    <property type="method" value="EM"/>
    <property type="resolution" value="11.30 A"/>
    <property type="chains" value="B/E/F/H/J/L/N/P=2-46"/>
</dbReference>
<dbReference type="PDBsum" id="1LGH"/>
<dbReference type="PDBsum" id="7TUW"/>
<dbReference type="PDBsum" id="7TV3"/>
<dbReference type="PDBsum" id="8FB9"/>
<dbReference type="PDBsum" id="8FBB"/>
<dbReference type="EMDB" id="EMD-26134"/>
<dbReference type="EMDB" id="EMD-26138"/>
<dbReference type="EMDB" id="EMD-28962"/>
<dbReference type="EMDB" id="EMD-28963"/>
<dbReference type="SMR" id="P95673"/>
<dbReference type="DrugBank" id="DB07646">
    <property type="generic name" value="UNDECYLAMINE-N,N-DIMETHYL-N-OXIDE"/>
</dbReference>
<dbReference type="EvolutionaryTrace" id="P95673"/>
<dbReference type="GO" id="GO:0005886">
    <property type="term" value="C:plasma membrane"/>
    <property type="evidence" value="ECO:0007669"/>
    <property type="project" value="UniProtKB-SubCell"/>
</dbReference>
<dbReference type="GO" id="GO:0030077">
    <property type="term" value="C:plasma membrane light-harvesting complex"/>
    <property type="evidence" value="ECO:0007669"/>
    <property type="project" value="InterPro"/>
</dbReference>
<dbReference type="GO" id="GO:0042314">
    <property type="term" value="F:bacteriochlorophyll binding"/>
    <property type="evidence" value="ECO:0007669"/>
    <property type="project" value="UniProtKB-KW"/>
</dbReference>
<dbReference type="GO" id="GO:0045156">
    <property type="term" value="F:electron transporter, transferring electrons within the cyclic electron transport pathway of photosynthesis activity"/>
    <property type="evidence" value="ECO:0007669"/>
    <property type="project" value="InterPro"/>
</dbReference>
<dbReference type="GO" id="GO:0046872">
    <property type="term" value="F:metal ion binding"/>
    <property type="evidence" value="ECO:0007669"/>
    <property type="project" value="UniProtKB-KW"/>
</dbReference>
<dbReference type="GO" id="GO:0019684">
    <property type="term" value="P:photosynthesis, light reaction"/>
    <property type="evidence" value="ECO:0007669"/>
    <property type="project" value="InterPro"/>
</dbReference>
<dbReference type="Gene3D" id="1.20.5.250">
    <property type="match status" value="1"/>
</dbReference>
<dbReference type="InterPro" id="IPR000066">
    <property type="entry name" value="Antenna_a/b"/>
</dbReference>
<dbReference type="InterPro" id="IPR023623">
    <property type="entry name" value="Antenna_beta_CS"/>
</dbReference>
<dbReference type="InterPro" id="IPR023624">
    <property type="entry name" value="Antenna_beta_dom_sf"/>
</dbReference>
<dbReference type="InterPro" id="IPR002362">
    <property type="entry name" value="LHB-1/5"/>
</dbReference>
<dbReference type="InterPro" id="IPR035889">
    <property type="entry name" value="Light-harvesting_complex"/>
</dbReference>
<dbReference type="NCBIfam" id="NF040862">
    <property type="entry name" value="pufB_517_ASD"/>
    <property type="match status" value="1"/>
</dbReference>
<dbReference type="Pfam" id="PF00556">
    <property type="entry name" value="LHC"/>
    <property type="match status" value="1"/>
</dbReference>
<dbReference type="PIRSF" id="PIRSF002900">
    <property type="entry name" value="Antenna_beta"/>
    <property type="match status" value="1"/>
</dbReference>
<dbReference type="PRINTS" id="PR00674">
    <property type="entry name" value="LIGHTHARVSTB"/>
</dbReference>
<dbReference type="SUPFAM" id="SSF56918">
    <property type="entry name" value="Light-harvesting complex subunits"/>
    <property type="match status" value="1"/>
</dbReference>
<dbReference type="PROSITE" id="PS00969">
    <property type="entry name" value="ANTENNA_COMP_BETA"/>
    <property type="match status" value="1"/>
</dbReference>
<gene>
    <name type="primary">B1</name>
</gene>